<comment type="function">
    <text evidence="1">Carrier of the growing fatty acid chain in fatty acid biosynthesis.</text>
</comment>
<comment type="pathway">
    <text evidence="1">Lipid metabolism; fatty acid biosynthesis.</text>
</comment>
<comment type="subcellular location">
    <subcellularLocation>
        <location evidence="1">Cytoplasm</location>
    </subcellularLocation>
</comment>
<comment type="PTM">
    <text evidence="1">4'-phosphopantetheine is transferred from CoA to a specific serine of apo-ACP by AcpS. This modification is essential for activity because fatty acids are bound in thioester linkage to the sulfhydryl of the prosthetic group.</text>
</comment>
<comment type="similarity">
    <text evidence="1">Belongs to the acyl carrier protein (ACP) family.</text>
</comment>
<reference key="1">
    <citation type="submission" date="2009-07" db="EMBL/GenBank/DDBJ databases">
        <title>Complete sequence of Pectobacterium carotovorum subsp. carotovorum PC1.</title>
        <authorList>
            <consortium name="US DOE Joint Genome Institute"/>
            <person name="Lucas S."/>
            <person name="Copeland A."/>
            <person name="Lapidus A."/>
            <person name="Glavina del Rio T."/>
            <person name="Tice H."/>
            <person name="Bruce D."/>
            <person name="Goodwin L."/>
            <person name="Pitluck S."/>
            <person name="Munk A.C."/>
            <person name="Brettin T."/>
            <person name="Detter J.C."/>
            <person name="Han C."/>
            <person name="Tapia R."/>
            <person name="Larimer F."/>
            <person name="Land M."/>
            <person name="Hauser L."/>
            <person name="Kyrpides N."/>
            <person name="Mikhailova N."/>
            <person name="Balakrishnan V."/>
            <person name="Glasner J."/>
            <person name="Perna N.T."/>
        </authorList>
    </citation>
    <scope>NUCLEOTIDE SEQUENCE [LARGE SCALE GENOMIC DNA]</scope>
    <source>
        <strain>PC1</strain>
    </source>
</reference>
<protein>
    <recommendedName>
        <fullName evidence="1">Acyl carrier protein</fullName>
        <shortName evidence="1">ACP</shortName>
    </recommendedName>
</protein>
<feature type="chain" id="PRO_1000213914" description="Acyl carrier protein">
    <location>
        <begin position="1"/>
        <end position="78"/>
    </location>
</feature>
<feature type="domain" description="Carrier" evidence="2">
    <location>
        <begin position="2"/>
        <end position="77"/>
    </location>
</feature>
<feature type="modified residue" description="O-(pantetheine 4'-phosphoryl)serine" evidence="2">
    <location>
        <position position="37"/>
    </location>
</feature>
<sequence length="78" mass="8712">MSTIEERVKKIIVEQLGVKQEEVVNNASFVDDLGADSLDTVELVMALEEEFDTEIPDEEAEKITTVQAAIDFIQANQQ</sequence>
<gene>
    <name evidence="1" type="primary">acpP</name>
    <name type="ordered locus">PC1_2502</name>
</gene>
<dbReference type="EMBL" id="CP001657">
    <property type="protein sequence ID" value="ACT13533.1"/>
    <property type="molecule type" value="Genomic_DNA"/>
</dbReference>
<dbReference type="RefSeq" id="WP_005970506.1">
    <property type="nucleotide sequence ID" value="NC_012917.1"/>
</dbReference>
<dbReference type="SMR" id="C6DKT2"/>
<dbReference type="STRING" id="561230.PC1_2502"/>
<dbReference type="GeneID" id="93390714"/>
<dbReference type="KEGG" id="pct:PC1_2502"/>
<dbReference type="eggNOG" id="COG0236">
    <property type="taxonomic scope" value="Bacteria"/>
</dbReference>
<dbReference type="HOGENOM" id="CLU_108696_5_1_6"/>
<dbReference type="OrthoDB" id="9804551at2"/>
<dbReference type="UniPathway" id="UPA00094"/>
<dbReference type="Proteomes" id="UP000002736">
    <property type="component" value="Chromosome"/>
</dbReference>
<dbReference type="GO" id="GO:0005829">
    <property type="term" value="C:cytosol"/>
    <property type="evidence" value="ECO:0007669"/>
    <property type="project" value="TreeGrafter"/>
</dbReference>
<dbReference type="GO" id="GO:0016020">
    <property type="term" value="C:membrane"/>
    <property type="evidence" value="ECO:0007669"/>
    <property type="project" value="GOC"/>
</dbReference>
<dbReference type="GO" id="GO:0000035">
    <property type="term" value="F:acyl binding"/>
    <property type="evidence" value="ECO:0007669"/>
    <property type="project" value="TreeGrafter"/>
</dbReference>
<dbReference type="GO" id="GO:0000036">
    <property type="term" value="F:acyl carrier activity"/>
    <property type="evidence" value="ECO:0007669"/>
    <property type="project" value="UniProtKB-UniRule"/>
</dbReference>
<dbReference type="GO" id="GO:0009245">
    <property type="term" value="P:lipid A biosynthetic process"/>
    <property type="evidence" value="ECO:0007669"/>
    <property type="project" value="TreeGrafter"/>
</dbReference>
<dbReference type="FunFam" id="1.10.1200.10:FF:000001">
    <property type="entry name" value="Acyl carrier protein"/>
    <property type="match status" value="1"/>
</dbReference>
<dbReference type="Gene3D" id="1.10.1200.10">
    <property type="entry name" value="ACP-like"/>
    <property type="match status" value="1"/>
</dbReference>
<dbReference type="HAMAP" id="MF_01217">
    <property type="entry name" value="Acyl_carrier"/>
    <property type="match status" value="1"/>
</dbReference>
<dbReference type="InterPro" id="IPR003231">
    <property type="entry name" value="ACP"/>
</dbReference>
<dbReference type="InterPro" id="IPR036736">
    <property type="entry name" value="ACP-like_sf"/>
</dbReference>
<dbReference type="InterPro" id="IPR009081">
    <property type="entry name" value="PP-bd_ACP"/>
</dbReference>
<dbReference type="InterPro" id="IPR006162">
    <property type="entry name" value="Ppantetheine_attach_site"/>
</dbReference>
<dbReference type="NCBIfam" id="TIGR00517">
    <property type="entry name" value="acyl_carrier"/>
    <property type="match status" value="1"/>
</dbReference>
<dbReference type="NCBIfam" id="NF002148">
    <property type="entry name" value="PRK00982.1-2"/>
    <property type="match status" value="1"/>
</dbReference>
<dbReference type="NCBIfam" id="NF002149">
    <property type="entry name" value="PRK00982.1-3"/>
    <property type="match status" value="1"/>
</dbReference>
<dbReference type="NCBIfam" id="NF002150">
    <property type="entry name" value="PRK00982.1-4"/>
    <property type="match status" value="1"/>
</dbReference>
<dbReference type="NCBIfam" id="NF002151">
    <property type="entry name" value="PRK00982.1-5"/>
    <property type="match status" value="1"/>
</dbReference>
<dbReference type="PANTHER" id="PTHR20863">
    <property type="entry name" value="ACYL CARRIER PROTEIN"/>
    <property type="match status" value="1"/>
</dbReference>
<dbReference type="PANTHER" id="PTHR20863:SF76">
    <property type="entry name" value="CARRIER DOMAIN-CONTAINING PROTEIN"/>
    <property type="match status" value="1"/>
</dbReference>
<dbReference type="Pfam" id="PF00550">
    <property type="entry name" value="PP-binding"/>
    <property type="match status" value="1"/>
</dbReference>
<dbReference type="SUPFAM" id="SSF47336">
    <property type="entry name" value="ACP-like"/>
    <property type="match status" value="1"/>
</dbReference>
<dbReference type="PROSITE" id="PS50075">
    <property type="entry name" value="CARRIER"/>
    <property type="match status" value="1"/>
</dbReference>
<dbReference type="PROSITE" id="PS00012">
    <property type="entry name" value="PHOSPHOPANTETHEINE"/>
    <property type="match status" value="1"/>
</dbReference>
<evidence type="ECO:0000255" key="1">
    <source>
        <dbReference type="HAMAP-Rule" id="MF_01217"/>
    </source>
</evidence>
<evidence type="ECO:0000255" key="2">
    <source>
        <dbReference type="PROSITE-ProRule" id="PRU00258"/>
    </source>
</evidence>
<accession>C6DKT2</accession>
<keyword id="KW-0963">Cytoplasm</keyword>
<keyword id="KW-0275">Fatty acid biosynthesis</keyword>
<keyword id="KW-0276">Fatty acid metabolism</keyword>
<keyword id="KW-0444">Lipid biosynthesis</keyword>
<keyword id="KW-0443">Lipid metabolism</keyword>
<keyword id="KW-0596">Phosphopantetheine</keyword>
<keyword id="KW-0597">Phosphoprotein</keyword>
<proteinExistence type="inferred from homology"/>
<name>ACP_PECCP</name>
<organism>
    <name type="scientific">Pectobacterium carotovorum subsp. carotovorum (strain PC1)</name>
    <dbReference type="NCBI Taxonomy" id="561230"/>
    <lineage>
        <taxon>Bacteria</taxon>
        <taxon>Pseudomonadati</taxon>
        <taxon>Pseudomonadota</taxon>
        <taxon>Gammaproteobacteria</taxon>
        <taxon>Enterobacterales</taxon>
        <taxon>Pectobacteriaceae</taxon>
        <taxon>Pectobacterium</taxon>
    </lineage>
</organism>